<protein>
    <recommendedName>
        <fullName evidence="1">Small ribosomal subunit protein uS10</fullName>
    </recommendedName>
    <alternativeName>
        <fullName evidence="2">30S ribosomal protein S10</fullName>
    </alternativeName>
</protein>
<comment type="function">
    <text evidence="1">Involved in the binding of tRNA to the ribosomes.</text>
</comment>
<comment type="subunit">
    <text evidence="1">Part of the 30S ribosomal subunit.</text>
</comment>
<comment type="similarity">
    <text evidence="1">Belongs to the universal ribosomal protein uS10 family.</text>
</comment>
<reference key="1">
    <citation type="journal article" date="2009" name="Proc. Natl. Acad. Sci. U.S.A.">
        <title>The genomic basis of trophic strategy in marine bacteria.</title>
        <authorList>
            <person name="Lauro F.M."/>
            <person name="McDougald D."/>
            <person name="Thomas T."/>
            <person name="Williams T.J."/>
            <person name="Egan S."/>
            <person name="Rice S."/>
            <person name="DeMaere M.Z."/>
            <person name="Ting L."/>
            <person name="Ertan H."/>
            <person name="Johnson J."/>
            <person name="Ferriera S."/>
            <person name="Lapidus A."/>
            <person name="Anderson I."/>
            <person name="Kyrpides N."/>
            <person name="Munk A.C."/>
            <person name="Detter C."/>
            <person name="Han C.S."/>
            <person name="Brown M.V."/>
            <person name="Robb F.T."/>
            <person name="Kjelleberg S."/>
            <person name="Cavicchioli R."/>
        </authorList>
    </citation>
    <scope>NUCLEOTIDE SEQUENCE [LARGE SCALE GENOMIC DNA]</scope>
    <source>
        <strain>DSM 13593 / LMG 18877 / RB2256</strain>
    </source>
</reference>
<proteinExistence type="inferred from homology"/>
<sequence>METQNIRIRLKAFDHRVLDQATTDIADTARRTGALIRGPIPLPTRIEKFTVNRGPHIDKKSREQFEVRTHKRLLDIVQPTPQTVDALMKLDLAAGVNVEIKLA</sequence>
<feature type="chain" id="PRO_0000258574" description="Small ribosomal subunit protein uS10">
    <location>
        <begin position="1"/>
        <end position="103"/>
    </location>
</feature>
<gene>
    <name evidence="1" type="primary">rpsJ</name>
    <name type="ordered locus">Sala_2819</name>
</gene>
<keyword id="KW-1185">Reference proteome</keyword>
<keyword id="KW-0687">Ribonucleoprotein</keyword>
<keyword id="KW-0689">Ribosomal protein</keyword>
<evidence type="ECO:0000255" key="1">
    <source>
        <dbReference type="HAMAP-Rule" id="MF_00508"/>
    </source>
</evidence>
<evidence type="ECO:0000305" key="2"/>
<organism>
    <name type="scientific">Sphingopyxis alaskensis (strain DSM 13593 / LMG 18877 / RB2256)</name>
    <name type="common">Sphingomonas alaskensis</name>
    <dbReference type="NCBI Taxonomy" id="317655"/>
    <lineage>
        <taxon>Bacteria</taxon>
        <taxon>Pseudomonadati</taxon>
        <taxon>Pseudomonadota</taxon>
        <taxon>Alphaproteobacteria</taxon>
        <taxon>Sphingomonadales</taxon>
        <taxon>Sphingomonadaceae</taxon>
        <taxon>Sphingopyxis</taxon>
    </lineage>
</organism>
<name>RS10_SPHAL</name>
<dbReference type="EMBL" id="CP000356">
    <property type="protein sequence ID" value="ABF54524.1"/>
    <property type="molecule type" value="Genomic_DNA"/>
</dbReference>
<dbReference type="RefSeq" id="WP_011543089.1">
    <property type="nucleotide sequence ID" value="NC_008048.1"/>
</dbReference>
<dbReference type="SMR" id="Q1GP98"/>
<dbReference type="STRING" id="317655.Sala_2819"/>
<dbReference type="KEGG" id="sal:Sala_2819"/>
<dbReference type="eggNOG" id="COG0051">
    <property type="taxonomic scope" value="Bacteria"/>
</dbReference>
<dbReference type="HOGENOM" id="CLU_122625_1_3_5"/>
<dbReference type="OrthoDB" id="9804464at2"/>
<dbReference type="Proteomes" id="UP000006578">
    <property type="component" value="Chromosome"/>
</dbReference>
<dbReference type="GO" id="GO:1990904">
    <property type="term" value="C:ribonucleoprotein complex"/>
    <property type="evidence" value="ECO:0007669"/>
    <property type="project" value="UniProtKB-KW"/>
</dbReference>
<dbReference type="GO" id="GO:0005840">
    <property type="term" value="C:ribosome"/>
    <property type="evidence" value="ECO:0007669"/>
    <property type="project" value="UniProtKB-KW"/>
</dbReference>
<dbReference type="GO" id="GO:0003735">
    <property type="term" value="F:structural constituent of ribosome"/>
    <property type="evidence" value="ECO:0007669"/>
    <property type="project" value="InterPro"/>
</dbReference>
<dbReference type="GO" id="GO:0000049">
    <property type="term" value="F:tRNA binding"/>
    <property type="evidence" value="ECO:0007669"/>
    <property type="project" value="UniProtKB-UniRule"/>
</dbReference>
<dbReference type="GO" id="GO:0006412">
    <property type="term" value="P:translation"/>
    <property type="evidence" value="ECO:0007669"/>
    <property type="project" value="UniProtKB-UniRule"/>
</dbReference>
<dbReference type="FunFam" id="3.30.70.600:FF:000001">
    <property type="entry name" value="30S ribosomal protein S10"/>
    <property type="match status" value="1"/>
</dbReference>
<dbReference type="Gene3D" id="3.30.70.600">
    <property type="entry name" value="Ribosomal protein S10 domain"/>
    <property type="match status" value="1"/>
</dbReference>
<dbReference type="HAMAP" id="MF_00508">
    <property type="entry name" value="Ribosomal_uS10"/>
    <property type="match status" value="1"/>
</dbReference>
<dbReference type="InterPro" id="IPR001848">
    <property type="entry name" value="Ribosomal_uS10"/>
</dbReference>
<dbReference type="InterPro" id="IPR018268">
    <property type="entry name" value="Ribosomal_uS10_CS"/>
</dbReference>
<dbReference type="InterPro" id="IPR027486">
    <property type="entry name" value="Ribosomal_uS10_dom"/>
</dbReference>
<dbReference type="InterPro" id="IPR036838">
    <property type="entry name" value="Ribosomal_uS10_dom_sf"/>
</dbReference>
<dbReference type="NCBIfam" id="NF001861">
    <property type="entry name" value="PRK00596.1"/>
    <property type="match status" value="1"/>
</dbReference>
<dbReference type="NCBIfam" id="TIGR01049">
    <property type="entry name" value="rpsJ_bact"/>
    <property type="match status" value="1"/>
</dbReference>
<dbReference type="PANTHER" id="PTHR11700">
    <property type="entry name" value="30S RIBOSOMAL PROTEIN S10 FAMILY MEMBER"/>
    <property type="match status" value="1"/>
</dbReference>
<dbReference type="Pfam" id="PF00338">
    <property type="entry name" value="Ribosomal_S10"/>
    <property type="match status" value="1"/>
</dbReference>
<dbReference type="PRINTS" id="PR00971">
    <property type="entry name" value="RIBOSOMALS10"/>
</dbReference>
<dbReference type="SMART" id="SM01403">
    <property type="entry name" value="Ribosomal_S10"/>
    <property type="match status" value="1"/>
</dbReference>
<dbReference type="SUPFAM" id="SSF54999">
    <property type="entry name" value="Ribosomal protein S10"/>
    <property type="match status" value="1"/>
</dbReference>
<dbReference type="PROSITE" id="PS00361">
    <property type="entry name" value="RIBOSOMAL_S10"/>
    <property type="match status" value="1"/>
</dbReference>
<accession>Q1GP98</accession>